<organismHost>
    <name type="scientific">Homo sapiens</name>
    <name type="common">Human</name>
    <dbReference type="NCBI Taxonomy" id="9606"/>
</organismHost>
<organism>
    <name type="scientific">Human cytomegalovirus (strain Merlin)</name>
    <name type="common">HHV-5</name>
    <name type="synonym">Human herpesvirus 5</name>
    <dbReference type="NCBI Taxonomy" id="295027"/>
    <lineage>
        <taxon>Viruses</taxon>
        <taxon>Duplodnaviria</taxon>
        <taxon>Heunggongvirae</taxon>
        <taxon>Peploviricota</taxon>
        <taxon>Herviviricetes</taxon>
        <taxon>Herpesvirales</taxon>
        <taxon>Orthoherpesviridae</taxon>
        <taxon>Betaherpesvirinae</taxon>
        <taxon>Cytomegalovirus</taxon>
        <taxon>Cytomegalovirus humanbeta5</taxon>
        <taxon>Human cytomegalovirus</taxon>
    </lineage>
</organism>
<dbReference type="EMBL" id="AY446894">
    <property type="protein sequence ID" value="AAR31722.1"/>
    <property type="molecule type" value="Genomic_DNA"/>
</dbReference>
<dbReference type="RefSeq" id="YP_081618.1">
    <property type="nucleotide sequence ID" value="NC_006273.2"/>
</dbReference>
<dbReference type="SMR" id="Q6SVX3"/>
<dbReference type="BioGRID" id="1678000">
    <property type="interactions" value="1"/>
</dbReference>
<dbReference type="GeneID" id="3077447"/>
<dbReference type="KEGG" id="vg:3077447"/>
<dbReference type="Reactome" id="R-HSA-9609690">
    <property type="pathway name" value="HCMV Early Events"/>
</dbReference>
<dbReference type="Proteomes" id="UP000000938">
    <property type="component" value="Segment"/>
</dbReference>
<dbReference type="GO" id="GO:0033644">
    <property type="term" value="C:host cell membrane"/>
    <property type="evidence" value="ECO:0007669"/>
    <property type="project" value="UniProtKB-SubCell"/>
</dbReference>
<dbReference type="GO" id="GO:0016020">
    <property type="term" value="C:membrane"/>
    <property type="evidence" value="ECO:0007669"/>
    <property type="project" value="UniProtKB-KW"/>
</dbReference>
<dbReference type="InterPro" id="IPR031384">
    <property type="entry name" value="HHV-5_US34A"/>
</dbReference>
<dbReference type="Pfam" id="PF17087">
    <property type="entry name" value="HHV-5_US34A"/>
    <property type="match status" value="1"/>
</dbReference>
<evidence type="ECO:0000255" key="1"/>
<evidence type="ECO:0000305" key="2"/>
<sequence length="64" mass="8085">MLKFFLKLRKRRRPVVVPRFVRFIVYVVLFTVAVQRVKQERDAHLRRYEERLQKNRARRRQSFP</sequence>
<accession>Q6SVX3</accession>
<gene>
    <name type="primary">US34A</name>
</gene>
<name>US34A_HCMVM</name>
<comment type="subcellular location">
    <subcellularLocation>
        <location evidence="2">Host membrane</location>
        <topology evidence="2">Single-pass membrane protein</topology>
    </subcellularLocation>
</comment>
<comment type="similarity">
    <text evidence="2">Belongs to the HHV-5 US34A protein family.</text>
</comment>
<keyword id="KW-1043">Host membrane</keyword>
<keyword id="KW-0472">Membrane</keyword>
<keyword id="KW-1185">Reference proteome</keyword>
<keyword id="KW-0812">Transmembrane</keyword>
<keyword id="KW-1133">Transmembrane helix</keyword>
<reference key="1">
    <citation type="journal article" date="2004" name="J. Gen. Virol.">
        <title>Genetic content of wild-type human cytomegalovirus.</title>
        <authorList>
            <person name="Dolan A."/>
            <person name="Cunningham C."/>
            <person name="Hector R.D."/>
            <person name="Hassan-Walker A.F."/>
            <person name="Lee L."/>
            <person name="Addison C."/>
            <person name="Dargan D.J."/>
            <person name="McGeoch D.J."/>
            <person name="Gatherer D."/>
            <person name="Emery V.C."/>
            <person name="Griffiths P.D."/>
            <person name="Sinzger C."/>
            <person name="McSharry B.P."/>
            <person name="Wilkinson G.W.G."/>
            <person name="Davison A.J."/>
        </authorList>
    </citation>
    <scope>NUCLEOTIDE SEQUENCE [GENOMIC DNA]</scope>
</reference>
<protein>
    <recommendedName>
        <fullName>Uncharacterized protein US34A</fullName>
    </recommendedName>
</protein>
<proteinExistence type="inferred from homology"/>
<feature type="chain" id="PRO_0000115296" description="Uncharacterized protein US34A">
    <location>
        <begin position="1"/>
        <end position="64"/>
    </location>
</feature>
<feature type="transmembrane region" description="Helical" evidence="1">
    <location>
        <begin position="15"/>
        <end position="37"/>
    </location>
</feature>